<gene>
    <name evidence="1" type="primary">rpoC</name>
    <name type="ordered locus">CJA_0693</name>
</gene>
<protein>
    <recommendedName>
        <fullName evidence="1">DNA-directed RNA polymerase subunit beta'</fullName>
        <shortName evidence="1">RNAP subunit beta'</shortName>
        <ecNumber evidence="1">2.7.7.6</ecNumber>
    </recommendedName>
    <alternativeName>
        <fullName evidence="1">RNA polymerase subunit beta'</fullName>
    </alternativeName>
    <alternativeName>
        <fullName evidence="1">Transcriptase subunit beta'</fullName>
    </alternativeName>
</protein>
<evidence type="ECO:0000255" key="1">
    <source>
        <dbReference type="HAMAP-Rule" id="MF_01322"/>
    </source>
</evidence>
<evidence type="ECO:0000305" key="2"/>
<dbReference type="EC" id="2.7.7.6" evidence="1"/>
<dbReference type="EMBL" id="CP000934">
    <property type="protein sequence ID" value="ACE85437.1"/>
    <property type="status" value="ALT_INIT"/>
    <property type="molecule type" value="Genomic_DNA"/>
</dbReference>
<dbReference type="RefSeq" id="WP_041551957.1">
    <property type="nucleotide sequence ID" value="NC_010995.1"/>
</dbReference>
<dbReference type="SMR" id="B3PK31"/>
<dbReference type="STRING" id="498211.CJA_0693"/>
<dbReference type="KEGG" id="cja:CJA_0693"/>
<dbReference type="eggNOG" id="COG0086">
    <property type="taxonomic scope" value="Bacteria"/>
</dbReference>
<dbReference type="HOGENOM" id="CLU_000524_3_1_6"/>
<dbReference type="OrthoDB" id="9815296at2"/>
<dbReference type="Proteomes" id="UP000001036">
    <property type="component" value="Chromosome"/>
</dbReference>
<dbReference type="GO" id="GO:0000428">
    <property type="term" value="C:DNA-directed RNA polymerase complex"/>
    <property type="evidence" value="ECO:0007669"/>
    <property type="project" value="UniProtKB-KW"/>
</dbReference>
<dbReference type="GO" id="GO:0003677">
    <property type="term" value="F:DNA binding"/>
    <property type="evidence" value="ECO:0007669"/>
    <property type="project" value="UniProtKB-UniRule"/>
</dbReference>
<dbReference type="GO" id="GO:0003899">
    <property type="term" value="F:DNA-directed RNA polymerase activity"/>
    <property type="evidence" value="ECO:0007669"/>
    <property type="project" value="UniProtKB-UniRule"/>
</dbReference>
<dbReference type="GO" id="GO:0000287">
    <property type="term" value="F:magnesium ion binding"/>
    <property type="evidence" value="ECO:0007669"/>
    <property type="project" value="UniProtKB-UniRule"/>
</dbReference>
<dbReference type="GO" id="GO:0008270">
    <property type="term" value="F:zinc ion binding"/>
    <property type="evidence" value="ECO:0007669"/>
    <property type="project" value="UniProtKB-UniRule"/>
</dbReference>
<dbReference type="GO" id="GO:0006351">
    <property type="term" value="P:DNA-templated transcription"/>
    <property type="evidence" value="ECO:0007669"/>
    <property type="project" value="UniProtKB-UniRule"/>
</dbReference>
<dbReference type="CDD" id="cd02655">
    <property type="entry name" value="RNAP_beta'_C"/>
    <property type="match status" value="1"/>
</dbReference>
<dbReference type="CDD" id="cd01609">
    <property type="entry name" value="RNAP_beta'_N"/>
    <property type="match status" value="1"/>
</dbReference>
<dbReference type="FunFam" id="1.10.132.30:FF:000003">
    <property type="entry name" value="DNA-directed RNA polymerase subunit beta"/>
    <property type="match status" value="1"/>
</dbReference>
<dbReference type="FunFam" id="1.10.150.390:FF:000002">
    <property type="entry name" value="DNA-directed RNA polymerase subunit beta"/>
    <property type="match status" value="1"/>
</dbReference>
<dbReference type="FunFam" id="1.10.40.90:FF:000001">
    <property type="entry name" value="DNA-directed RNA polymerase subunit beta"/>
    <property type="match status" value="1"/>
</dbReference>
<dbReference type="FunFam" id="4.10.860.120:FF:000001">
    <property type="entry name" value="DNA-directed RNA polymerase subunit beta"/>
    <property type="match status" value="1"/>
</dbReference>
<dbReference type="Gene3D" id="1.10.132.30">
    <property type="match status" value="1"/>
</dbReference>
<dbReference type="Gene3D" id="1.10.150.390">
    <property type="match status" value="1"/>
</dbReference>
<dbReference type="Gene3D" id="1.10.1790.20">
    <property type="match status" value="1"/>
</dbReference>
<dbReference type="Gene3D" id="1.10.40.90">
    <property type="match status" value="1"/>
</dbReference>
<dbReference type="Gene3D" id="2.40.40.20">
    <property type="match status" value="1"/>
</dbReference>
<dbReference type="Gene3D" id="2.40.50.100">
    <property type="match status" value="3"/>
</dbReference>
<dbReference type="Gene3D" id="4.10.860.120">
    <property type="entry name" value="RNA polymerase II, clamp domain"/>
    <property type="match status" value="1"/>
</dbReference>
<dbReference type="Gene3D" id="1.10.274.100">
    <property type="entry name" value="RNA polymerase Rpb1, domain 3"/>
    <property type="match status" value="1"/>
</dbReference>
<dbReference type="HAMAP" id="MF_01322">
    <property type="entry name" value="RNApol_bact_RpoC"/>
    <property type="match status" value="1"/>
</dbReference>
<dbReference type="InterPro" id="IPR045867">
    <property type="entry name" value="DNA-dir_RpoC_beta_prime"/>
</dbReference>
<dbReference type="InterPro" id="IPR012754">
    <property type="entry name" value="DNA-dir_RpoC_beta_prime_bact"/>
</dbReference>
<dbReference type="InterPro" id="IPR000722">
    <property type="entry name" value="RNA_pol_asu"/>
</dbReference>
<dbReference type="InterPro" id="IPR006592">
    <property type="entry name" value="RNA_pol_N"/>
</dbReference>
<dbReference type="InterPro" id="IPR007080">
    <property type="entry name" value="RNA_pol_Rpb1_1"/>
</dbReference>
<dbReference type="InterPro" id="IPR007066">
    <property type="entry name" value="RNA_pol_Rpb1_3"/>
</dbReference>
<dbReference type="InterPro" id="IPR042102">
    <property type="entry name" value="RNA_pol_Rpb1_3_sf"/>
</dbReference>
<dbReference type="InterPro" id="IPR007083">
    <property type="entry name" value="RNA_pol_Rpb1_4"/>
</dbReference>
<dbReference type="InterPro" id="IPR007081">
    <property type="entry name" value="RNA_pol_Rpb1_5"/>
</dbReference>
<dbReference type="InterPro" id="IPR044893">
    <property type="entry name" value="RNA_pol_Rpb1_clamp_domain"/>
</dbReference>
<dbReference type="InterPro" id="IPR038120">
    <property type="entry name" value="Rpb1_funnel_sf"/>
</dbReference>
<dbReference type="NCBIfam" id="TIGR02386">
    <property type="entry name" value="rpoC_TIGR"/>
    <property type="match status" value="1"/>
</dbReference>
<dbReference type="PANTHER" id="PTHR19376">
    <property type="entry name" value="DNA-DIRECTED RNA POLYMERASE"/>
    <property type="match status" value="1"/>
</dbReference>
<dbReference type="PANTHER" id="PTHR19376:SF54">
    <property type="entry name" value="DNA-DIRECTED RNA POLYMERASE SUBUNIT BETA"/>
    <property type="match status" value="1"/>
</dbReference>
<dbReference type="Pfam" id="PF04997">
    <property type="entry name" value="RNA_pol_Rpb1_1"/>
    <property type="match status" value="1"/>
</dbReference>
<dbReference type="Pfam" id="PF00623">
    <property type="entry name" value="RNA_pol_Rpb1_2"/>
    <property type="match status" value="1"/>
</dbReference>
<dbReference type="Pfam" id="PF04983">
    <property type="entry name" value="RNA_pol_Rpb1_3"/>
    <property type="match status" value="1"/>
</dbReference>
<dbReference type="Pfam" id="PF05000">
    <property type="entry name" value="RNA_pol_Rpb1_4"/>
    <property type="match status" value="1"/>
</dbReference>
<dbReference type="Pfam" id="PF04998">
    <property type="entry name" value="RNA_pol_Rpb1_5"/>
    <property type="match status" value="1"/>
</dbReference>
<dbReference type="SMART" id="SM00663">
    <property type="entry name" value="RPOLA_N"/>
    <property type="match status" value="1"/>
</dbReference>
<dbReference type="SUPFAM" id="SSF64484">
    <property type="entry name" value="beta and beta-prime subunits of DNA dependent RNA-polymerase"/>
    <property type="match status" value="1"/>
</dbReference>
<name>RPOC_CELJU</name>
<comment type="function">
    <text evidence="1">DNA-dependent RNA polymerase catalyzes the transcription of DNA into RNA using the four ribonucleoside triphosphates as substrates.</text>
</comment>
<comment type="catalytic activity">
    <reaction evidence="1">
        <text>RNA(n) + a ribonucleoside 5'-triphosphate = RNA(n+1) + diphosphate</text>
        <dbReference type="Rhea" id="RHEA:21248"/>
        <dbReference type="Rhea" id="RHEA-COMP:14527"/>
        <dbReference type="Rhea" id="RHEA-COMP:17342"/>
        <dbReference type="ChEBI" id="CHEBI:33019"/>
        <dbReference type="ChEBI" id="CHEBI:61557"/>
        <dbReference type="ChEBI" id="CHEBI:140395"/>
        <dbReference type="EC" id="2.7.7.6"/>
    </reaction>
</comment>
<comment type="cofactor">
    <cofactor evidence="1">
        <name>Mg(2+)</name>
        <dbReference type="ChEBI" id="CHEBI:18420"/>
    </cofactor>
    <text evidence="1">Binds 1 Mg(2+) ion per subunit.</text>
</comment>
<comment type="cofactor">
    <cofactor evidence="1">
        <name>Zn(2+)</name>
        <dbReference type="ChEBI" id="CHEBI:29105"/>
    </cofactor>
    <text evidence="1">Binds 2 Zn(2+) ions per subunit.</text>
</comment>
<comment type="subunit">
    <text evidence="1">The RNAP catalytic core consists of 2 alpha, 1 beta, 1 beta' and 1 omega subunit. When a sigma factor is associated with the core the holoenzyme is formed, which can initiate transcription.</text>
</comment>
<comment type="similarity">
    <text evidence="1">Belongs to the RNA polymerase beta' chain family.</text>
</comment>
<comment type="sequence caution" evidence="2">
    <conflict type="erroneous initiation">
        <sequence resource="EMBL-CDS" id="ACE85437"/>
    </conflict>
    <text>Extended N-terminus.</text>
</comment>
<organism>
    <name type="scientific">Cellvibrio japonicus (strain Ueda107)</name>
    <name type="common">Pseudomonas fluorescens subsp. cellulosa</name>
    <dbReference type="NCBI Taxonomy" id="498211"/>
    <lineage>
        <taxon>Bacteria</taxon>
        <taxon>Pseudomonadati</taxon>
        <taxon>Pseudomonadota</taxon>
        <taxon>Gammaproteobacteria</taxon>
        <taxon>Cellvibrionales</taxon>
        <taxon>Cellvibrionaceae</taxon>
        <taxon>Cellvibrio</taxon>
    </lineage>
</organism>
<keyword id="KW-0240">DNA-directed RNA polymerase</keyword>
<keyword id="KW-0460">Magnesium</keyword>
<keyword id="KW-0479">Metal-binding</keyword>
<keyword id="KW-0548">Nucleotidyltransferase</keyword>
<keyword id="KW-1185">Reference proteome</keyword>
<keyword id="KW-0804">Transcription</keyword>
<keyword id="KW-0808">Transferase</keyword>
<keyword id="KW-0862">Zinc</keyword>
<feature type="chain" id="PRO_0000353321" description="DNA-directed RNA polymerase subunit beta'">
    <location>
        <begin position="1"/>
        <end position="1407"/>
    </location>
</feature>
<feature type="binding site" evidence="1">
    <location>
        <position position="70"/>
    </location>
    <ligand>
        <name>Zn(2+)</name>
        <dbReference type="ChEBI" id="CHEBI:29105"/>
        <label>1</label>
    </ligand>
</feature>
<feature type="binding site" evidence="1">
    <location>
        <position position="72"/>
    </location>
    <ligand>
        <name>Zn(2+)</name>
        <dbReference type="ChEBI" id="CHEBI:29105"/>
        <label>1</label>
    </ligand>
</feature>
<feature type="binding site" evidence="1">
    <location>
        <position position="85"/>
    </location>
    <ligand>
        <name>Zn(2+)</name>
        <dbReference type="ChEBI" id="CHEBI:29105"/>
        <label>1</label>
    </ligand>
</feature>
<feature type="binding site" evidence="1">
    <location>
        <position position="88"/>
    </location>
    <ligand>
        <name>Zn(2+)</name>
        <dbReference type="ChEBI" id="CHEBI:29105"/>
        <label>1</label>
    </ligand>
</feature>
<feature type="binding site" evidence="1">
    <location>
        <position position="460"/>
    </location>
    <ligand>
        <name>Mg(2+)</name>
        <dbReference type="ChEBI" id="CHEBI:18420"/>
    </ligand>
</feature>
<feature type="binding site" evidence="1">
    <location>
        <position position="462"/>
    </location>
    <ligand>
        <name>Mg(2+)</name>
        <dbReference type="ChEBI" id="CHEBI:18420"/>
    </ligand>
</feature>
<feature type="binding site" evidence="1">
    <location>
        <position position="464"/>
    </location>
    <ligand>
        <name>Mg(2+)</name>
        <dbReference type="ChEBI" id="CHEBI:18420"/>
    </ligand>
</feature>
<feature type="binding site" evidence="1">
    <location>
        <position position="814"/>
    </location>
    <ligand>
        <name>Zn(2+)</name>
        <dbReference type="ChEBI" id="CHEBI:29105"/>
        <label>2</label>
    </ligand>
</feature>
<feature type="binding site" evidence="1">
    <location>
        <position position="888"/>
    </location>
    <ligand>
        <name>Zn(2+)</name>
        <dbReference type="ChEBI" id="CHEBI:29105"/>
        <label>2</label>
    </ligand>
</feature>
<feature type="binding site" evidence="1">
    <location>
        <position position="895"/>
    </location>
    <ligand>
        <name>Zn(2+)</name>
        <dbReference type="ChEBI" id="CHEBI:29105"/>
        <label>2</label>
    </ligand>
</feature>
<feature type="binding site" evidence="1">
    <location>
        <position position="898"/>
    </location>
    <ligand>
        <name>Zn(2+)</name>
        <dbReference type="ChEBI" id="CHEBI:29105"/>
        <label>2</label>
    </ligand>
</feature>
<reference key="1">
    <citation type="journal article" date="2008" name="J. Bacteriol.">
        <title>Insights into plant cell wall degradation from the genome sequence of the soil bacterium Cellvibrio japonicus.</title>
        <authorList>
            <person name="DeBoy R.T."/>
            <person name="Mongodin E.F."/>
            <person name="Fouts D.E."/>
            <person name="Tailford L.E."/>
            <person name="Khouri H."/>
            <person name="Emerson J.B."/>
            <person name="Mohamoud Y."/>
            <person name="Watkins K."/>
            <person name="Henrissat B."/>
            <person name="Gilbert H.J."/>
            <person name="Nelson K.E."/>
        </authorList>
    </citation>
    <scope>NUCLEOTIDE SEQUENCE [LARGE SCALE GENOMIC DNA]</scope>
    <source>
        <strain>Ueda107</strain>
    </source>
</reference>
<sequence length="1407" mass="155406">MKDLLNLLKSQGQVEEFDSIRISLASPEMIRSWSFGEVKKPETINYRTFKPEREGLFCAKIFGPVKDYECLCGKYKRMKHRGIICEKCGVEVTLAKVRRERMGHIELASPVAHIWFLKSLPSRIGLLLDMTLRDIERVLYFESYVVTEPGMTTLERGQLLTDEQYFEAMEEFGDEFEAQMGAEAIQTLMRAIDLETEVQRLREEIPNTSSETKIKKYSKRLKLLEAFHFSGNKPEWMVMEVLPVLPPDLRPLVPLDGGRFATSDLNDLYRRVINRNNRLKRLLDLNAPDIIVRNEKRMLQEAVDALLDNGRRGRAITGSNKRPLKSLADMIKGKQGRFRQNLLGKRVDYSGRSVIVVGPTLRLHQCGLPKKMALELFKPFIFSKLELRGLATTIKAAKKMVEREEAVVWDILDEVIREHPVLLNRAPTLHRLGIQAFEPVLIEGKAIQLHPLVCSAYNADFDGDQMAVHVPLTIEAQLEARALMMSTNNILSPASGEPIIVPSQDVVLGLYWMTRERINAKGEGMVFADTMEVSRAYYSKQVDLQARIKVRLTETLIGAEGERTSETKLVQTTVGRVLLWEIVPAGIPLEMINRPMVKKAISAVINYCYRVVGLKATVIFADRLMYMGYDFSTKSGSSIGVNDFTIPAAKADIIARADAEVKEIETQYASGLVTQGEKYNKVIDIWSRANDLVAKSMMEGISKETVINRDGVEEQQSSFNSVFMYADSGARGSPAQIRQLAGMRGLMARPDGSIIETPIKANFREGLNVLQYFISTHGARKGLADTALKTANSGYLTRRLVDVAQDLVVTLQDCGTDSGLTMSPVIEGGDVIESLGDRILGRVVARDVIRPGSDEILVPAGTMIDEAWVGRIEEMGIDEVLVRSPITCESRNGICSMCYGRDLARGHRVNPGEAVGVIAAQSIGEPGTQLTMRTFHIGGAASRASAADSVQVKQEGTVRLLNVKVVSNPAGNLVAVSRSGELAIADASGRERERYKIPYGALITVKDGETVKGGQIVAKWDPHTHPIVSEVAGTVAFSGMEEGLSIRRQTDELTGLSSIEILDPAERPSAGKDLRPAITLVDAKGKELFLANTNVPAHYMLPAKAILTINNGDIINVGDIVARIPQEGSKTRDITGGLPRVADLFEARRPKEPAILAEISGTVSFGKETKGKRRLIITPTDGQVLDDGSTHYEVLIPKHRQLTVFEGEMVAKGEVVSDGPANPHDILRLQGVEALARYITNEIQDVYRLQGVKINDKHIETIVRQMLRKVEITTMGDSSFVKGEQVELTSVLEENEKLRAEGKQPAHYERLLLGITKASLATESFISAASFQETTRVLTEAAVTGKKDNLRGLKENVVVGRLIPAGTGLAYHNDRKRRREEALSEQVGVSAEDVEAALTEALKSSVS</sequence>
<accession>B3PK31</accession>
<proteinExistence type="inferred from homology"/>